<comment type="function">
    <text evidence="1">Tetrapolymerization of the monopyrrole PBG into the hydroxymethylbilane pre-uroporphyrinogen in several discrete steps.</text>
</comment>
<comment type="catalytic activity">
    <reaction evidence="1">
        <text>4 porphobilinogen + H2O = hydroxymethylbilane + 4 NH4(+)</text>
        <dbReference type="Rhea" id="RHEA:13185"/>
        <dbReference type="ChEBI" id="CHEBI:15377"/>
        <dbReference type="ChEBI" id="CHEBI:28938"/>
        <dbReference type="ChEBI" id="CHEBI:57845"/>
        <dbReference type="ChEBI" id="CHEBI:58126"/>
        <dbReference type="EC" id="2.5.1.61"/>
    </reaction>
</comment>
<comment type="cofactor">
    <cofactor evidence="1">
        <name>dipyrromethane</name>
        <dbReference type="ChEBI" id="CHEBI:60342"/>
    </cofactor>
    <text evidence="1">Binds 1 dipyrromethane group covalently.</text>
</comment>
<comment type="pathway">
    <text evidence="1">Porphyrin-containing compound metabolism; protoporphyrin-IX biosynthesis; coproporphyrinogen-III from 5-aminolevulinate: step 2/4.</text>
</comment>
<comment type="subunit">
    <text evidence="1">Monomer.</text>
</comment>
<comment type="miscellaneous">
    <text evidence="1">The porphobilinogen subunits are added to the dipyrromethane group.</text>
</comment>
<comment type="similarity">
    <text evidence="1">Belongs to the HMBS family.</text>
</comment>
<protein>
    <recommendedName>
        <fullName evidence="1">Porphobilinogen deaminase</fullName>
        <shortName evidence="1">PBG</shortName>
        <ecNumber evidence="1">2.5.1.61</ecNumber>
    </recommendedName>
    <alternativeName>
        <fullName evidence="1">Hydroxymethylbilane synthase</fullName>
        <shortName evidence="1">HMBS</shortName>
    </alternativeName>
    <alternativeName>
        <fullName evidence="1">Pre-uroporphyrinogen synthase</fullName>
    </alternativeName>
</protein>
<organism>
    <name type="scientific">Xylella fastidiosa (strain Temecula1 / ATCC 700964)</name>
    <dbReference type="NCBI Taxonomy" id="183190"/>
    <lineage>
        <taxon>Bacteria</taxon>
        <taxon>Pseudomonadati</taxon>
        <taxon>Pseudomonadota</taxon>
        <taxon>Gammaproteobacteria</taxon>
        <taxon>Lysobacterales</taxon>
        <taxon>Lysobacteraceae</taxon>
        <taxon>Xylella</taxon>
    </lineage>
</organism>
<feature type="chain" id="PRO_0000143013" description="Porphobilinogen deaminase">
    <location>
        <begin position="1"/>
        <end position="305"/>
    </location>
</feature>
<feature type="modified residue" description="S-(dipyrrolylmethanemethyl)cysteine" evidence="1">
    <location>
        <position position="240"/>
    </location>
</feature>
<keyword id="KW-0627">Porphyrin biosynthesis</keyword>
<keyword id="KW-1185">Reference proteome</keyword>
<keyword id="KW-0808">Transferase</keyword>
<sequence length="305" mass="32860">MPLLRIATRKSLLAMWQSEYVAARLRMLCPDLDVVLVPMSTRGDEILDRSLAAIGGKGLFLKELELAMLRGDADCAVHSLKDVPMDLEPPFMLAAVLSRDDPADALISNVYLSLESLPIGARVATSSLRRQAQLRFYRPDLRLFDLRGNVNTRLAKLDNGDYDAIVLACAGLRRLGLEQRMTARLAPPEWLPAPGQGAIAVESLTEDARIGTLLAGLDDLPTRKCVIAERTMNRALHGSCHVPVGAYASYEVGGMRLQGLVGCVADGRLVRAELCSAKDEGDMLGRAVAQCLLDAGAAELLAATA</sequence>
<evidence type="ECO:0000255" key="1">
    <source>
        <dbReference type="HAMAP-Rule" id="MF_00260"/>
    </source>
</evidence>
<reference key="1">
    <citation type="journal article" date="2003" name="J. Bacteriol.">
        <title>Comparative analyses of the complete genome sequences of Pierce's disease and citrus variegated chlorosis strains of Xylella fastidiosa.</title>
        <authorList>
            <person name="Van Sluys M.A."/>
            <person name="de Oliveira M.C."/>
            <person name="Monteiro-Vitorello C.B."/>
            <person name="Miyaki C.Y."/>
            <person name="Furlan L.R."/>
            <person name="Camargo L.E.A."/>
            <person name="da Silva A.C.R."/>
            <person name="Moon D.H."/>
            <person name="Takita M.A."/>
            <person name="Lemos E.G.M."/>
            <person name="Machado M.A."/>
            <person name="Ferro M.I.T."/>
            <person name="da Silva F.R."/>
            <person name="Goldman M.H.S."/>
            <person name="Goldman G.H."/>
            <person name="Lemos M.V.F."/>
            <person name="El-Dorry H."/>
            <person name="Tsai S.M."/>
            <person name="Carrer H."/>
            <person name="Carraro D.M."/>
            <person name="de Oliveira R.C."/>
            <person name="Nunes L.R."/>
            <person name="Siqueira W.J."/>
            <person name="Coutinho L.L."/>
            <person name="Kimura E.T."/>
            <person name="Ferro E.S."/>
            <person name="Harakava R."/>
            <person name="Kuramae E.E."/>
            <person name="Marino C.L."/>
            <person name="Giglioti E."/>
            <person name="Abreu I.L."/>
            <person name="Alves L.M.C."/>
            <person name="do Amaral A.M."/>
            <person name="Baia G.S."/>
            <person name="Blanco S.R."/>
            <person name="Brito M.S."/>
            <person name="Cannavan F.S."/>
            <person name="Celestino A.V."/>
            <person name="da Cunha A.F."/>
            <person name="Fenille R.C."/>
            <person name="Ferro J.A."/>
            <person name="Formighieri E.F."/>
            <person name="Kishi L.T."/>
            <person name="Leoni S.G."/>
            <person name="Oliveira A.R."/>
            <person name="Rosa V.E. Jr."/>
            <person name="Sassaki F.T."/>
            <person name="Sena J.A.D."/>
            <person name="de Souza A.A."/>
            <person name="Truffi D."/>
            <person name="Tsukumo F."/>
            <person name="Yanai G.M."/>
            <person name="Zaros L.G."/>
            <person name="Civerolo E.L."/>
            <person name="Simpson A.J.G."/>
            <person name="Almeida N.F. Jr."/>
            <person name="Setubal J.C."/>
            <person name="Kitajima J.P."/>
        </authorList>
    </citation>
    <scope>NUCLEOTIDE SEQUENCE [LARGE SCALE GENOMIC DNA]</scope>
    <source>
        <strain>Temecula1 / ATCC 700964</strain>
    </source>
</reference>
<gene>
    <name evidence="1" type="primary">hemC</name>
    <name type="ordered locus">PD_1152</name>
</gene>
<proteinExistence type="inferred from homology"/>
<accession>Q87CC9</accession>
<dbReference type="EC" id="2.5.1.61" evidence="1"/>
<dbReference type="EMBL" id="AE009442">
    <property type="protein sequence ID" value="AAO29007.1"/>
    <property type="molecule type" value="Genomic_DNA"/>
</dbReference>
<dbReference type="RefSeq" id="WP_004087310.1">
    <property type="nucleotide sequence ID" value="NC_004556.1"/>
</dbReference>
<dbReference type="SMR" id="Q87CC9"/>
<dbReference type="GeneID" id="93904945"/>
<dbReference type="KEGG" id="xft:PD_1152"/>
<dbReference type="HOGENOM" id="CLU_019704_0_2_6"/>
<dbReference type="UniPathway" id="UPA00251">
    <property type="reaction ID" value="UER00319"/>
</dbReference>
<dbReference type="Proteomes" id="UP000002516">
    <property type="component" value="Chromosome"/>
</dbReference>
<dbReference type="GO" id="GO:0005737">
    <property type="term" value="C:cytoplasm"/>
    <property type="evidence" value="ECO:0007669"/>
    <property type="project" value="TreeGrafter"/>
</dbReference>
<dbReference type="GO" id="GO:0004418">
    <property type="term" value="F:hydroxymethylbilane synthase activity"/>
    <property type="evidence" value="ECO:0007669"/>
    <property type="project" value="UniProtKB-UniRule"/>
</dbReference>
<dbReference type="GO" id="GO:0006782">
    <property type="term" value="P:protoporphyrinogen IX biosynthetic process"/>
    <property type="evidence" value="ECO:0007669"/>
    <property type="project" value="UniProtKB-UniRule"/>
</dbReference>
<dbReference type="CDD" id="cd13646">
    <property type="entry name" value="PBP2_EcHMBS_like"/>
    <property type="match status" value="1"/>
</dbReference>
<dbReference type="FunFam" id="3.40.190.10:FF:000004">
    <property type="entry name" value="Porphobilinogen deaminase"/>
    <property type="match status" value="1"/>
</dbReference>
<dbReference type="FunFam" id="3.40.190.10:FF:000005">
    <property type="entry name" value="Porphobilinogen deaminase"/>
    <property type="match status" value="1"/>
</dbReference>
<dbReference type="Gene3D" id="3.40.190.10">
    <property type="entry name" value="Periplasmic binding protein-like II"/>
    <property type="match status" value="2"/>
</dbReference>
<dbReference type="Gene3D" id="3.30.160.40">
    <property type="entry name" value="Porphobilinogen deaminase, C-terminal domain"/>
    <property type="match status" value="1"/>
</dbReference>
<dbReference type="HAMAP" id="MF_00260">
    <property type="entry name" value="Porphobil_deam"/>
    <property type="match status" value="1"/>
</dbReference>
<dbReference type="InterPro" id="IPR000860">
    <property type="entry name" value="HemC"/>
</dbReference>
<dbReference type="InterPro" id="IPR022419">
    <property type="entry name" value="Porphobilin_deaminase_cofac_BS"/>
</dbReference>
<dbReference type="InterPro" id="IPR022417">
    <property type="entry name" value="Porphobilin_deaminase_N"/>
</dbReference>
<dbReference type="InterPro" id="IPR022418">
    <property type="entry name" value="Porphobilinogen_deaminase_C"/>
</dbReference>
<dbReference type="InterPro" id="IPR036803">
    <property type="entry name" value="Porphobilinogen_deaminase_C_sf"/>
</dbReference>
<dbReference type="NCBIfam" id="TIGR00212">
    <property type="entry name" value="hemC"/>
    <property type="match status" value="1"/>
</dbReference>
<dbReference type="PANTHER" id="PTHR11557">
    <property type="entry name" value="PORPHOBILINOGEN DEAMINASE"/>
    <property type="match status" value="1"/>
</dbReference>
<dbReference type="PANTHER" id="PTHR11557:SF0">
    <property type="entry name" value="PORPHOBILINOGEN DEAMINASE"/>
    <property type="match status" value="1"/>
</dbReference>
<dbReference type="Pfam" id="PF01379">
    <property type="entry name" value="Porphobil_deam"/>
    <property type="match status" value="1"/>
</dbReference>
<dbReference type="Pfam" id="PF03900">
    <property type="entry name" value="Porphobil_deamC"/>
    <property type="match status" value="1"/>
</dbReference>
<dbReference type="PIRSF" id="PIRSF001438">
    <property type="entry name" value="4pyrrol_synth_OHMeBilane_synth"/>
    <property type="match status" value="1"/>
</dbReference>
<dbReference type="PRINTS" id="PR00151">
    <property type="entry name" value="PORPHBDMNASE"/>
</dbReference>
<dbReference type="SUPFAM" id="SSF53850">
    <property type="entry name" value="Periplasmic binding protein-like II"/>
    <property type="match status" value="1"/>
</dbReference>
<dbReference type="SUPFAM" id="SSF54782">
    <property type="entry name" value="Porphobilinogen deaminase (hydroxymethylbilane synthase), C-terminal domain"/>
    <property type="match status" value="1"/>
</dbReference>
<dbReference type="PROSITE" id="PS00533">
    <property type="entry name" value="PORPHOBILINOGEN_DEAM"/>
    <property type="match status" value="1"/>
</dbReference>
<name>HEM3_XYLFT</name>